<dbReference type="EC" id="1.14.14.18" evidence="1"/>
<dbReference type="EMBL" id="AE016877">
    <property type="protein sequence ID" value="AAP11450.1"/>
    <property type="molecule type" value="Genomic_DNA"/>
</dbReference>
<dbReference type="RefSeq" id="NP_834249.1">
    <property type="nucleotide sequence ID" value="NC_004722.1"/>
</dbReference>
<dbReference type="RefSeq" id="WP_000587818.1">
    <property type="nucleotide sequence ID" value="NZ_CP138336.1"/>
</dbReference>
<dbReference type="PDB" id="8AVH">
    <property type="method" value="X-ray"/>
    <property type="resolution" value="1.90 A"/>
    <property type="chains" value="A/B=1-107"/>
</dbReference>
<dbReference type="PDB" id="8AVI">
    <property type="method" value="X-ray"/>
    <property type="resolution" value="2.00 A"/>
    <property type="chains" value="A/B=1-107"/>
</dbReference>
<dbReference type="PDBsum" id="8AVH"/>
<dbReference type="PDBsum" id="8AVI"/>
<dbReference type="SMR" id="Q812Q3"/>
<dbReference type="STRING" id="226900.BC_4542"/>
<dbReference type="GeneID" id="72451203"/>
<dbReference type="KEGG" id="bce:BC4542"/>
<dbReference type="PATRIC" id="fig|226900.8.peg.4700"/>
<dbReference type="HOGENOM" id="CLU_141544_2_1_9"/>
<dbReference type="OrthoDB" id="384737at2"/>
<dbReference type="Proteomes" id="UP000001417">
    <property type="component" value="Chromosome"/>
</dbReference>
<dbReference type="GO" id="GO:0005737">
    <property type="term" value="C:cytoplasm"/>
    <property type="evidence" value="ECO:0007669"/>
    <property type="project" value="UniProtKB-SubCell"/>
</dbReference>
<dbReference type="GO" id="GO:0020037">
    <property type="term" value="F:heme binding"/>
    <property type="evidence" value="ECO:0007669"/>
    <property type="project" value="UniProtKB-UniRule"/>
</dbReference>
<dbReference type="GO" id="GO:0004392">
    <property type="term" value="F:heme oxygenase (decyclizing) activity"/>
    <property type="evidence" value="ECO:0000318"/>
    <property type="project" value="GO_Central"/>
</dbReference>
<dbReference type="GO" id="GO:0005506">
    <property type="term" value="F:iron ion binding"/>
    <property type="evidence" value="ECO:0007669"/>
    <property type="project" value="UniProtKB-UniRule"/>
</dbReference>
<dbReference type="GO" id="GO:0042167">
    <property type="term" value="P:heme catabolic process"/>
    <property type="evidence" value="ECO:0000318"/>
    <property type="project" value="GO_Central"/>
</dbReference>
<dbReference type="GO" id="GO:0033212">
    <property type="term" value="P:iron import into cell"/>
    <property type="evidence" value="ECO:0007669"/>
    <property type="project" value="InterPro"/>
</dbReference>
<dbReference type="Gene3D" id="3.30.70.100">
    <property type="match status" value="1"/>
</dbReference>
<dbReference type="HAMAP" id="MF_01272">
    <property type="entry name" value="Heme_degrading_monooxygenase"/>
    <property type="match status" value="1"/>
</dbReference>
<dbReference type="InterPro" id="IPR007138">
    <property type="entry name" value="ABM_dom"/>
</dbReference>
<dbReference type="InterPro" id="IPR011008">
    <property type="entry name" value="Dimeric_a/b-barrel"/>
</dbReference>
<dbReference type="InterPro" id="IPR050404">
    <property type="entry name" value="Heme-degrading_MO"/>
</dbReference>
<dbReference type="InterPro" id="IPR023953">
    <property type="entry name" value="IsdG"/>
</dbReference>
<dbReference type="NCBIfam" id="NF009839">
    <property type="entry name" value="PRK13314.1"/>
    <property type="match status" value="1"/>
</dbReference>
<dbReference type="PANTHER" id="PTHR34474:SF4">
    <property type="entry name" value="HEME OXYGENASE (STAPHYLOBILIN-PRODUCING) 1"/>
    <property type="match status" value="1"/>
</dbReference>
<dbReference type="PANTHER" id="PTHR34474">
    <property type="entry name" value="SIGNAL TRANSDUCTION PROTEIN TRAP"/>
    <property type="match status" value="1"/>
</dbReference>
<dbReference type="Pfam" id="PF03992">
    <property type="entry name" value="ABM"/>
    <property type="match status" value="1"/>
</dbReference>
<dbReference type="SUPFAM" id="SSF54909">
    <property type="entry name" value="Dimeric alpha+beta barrel"/>
    <property type="match status" value="1"/>
</dbReference>
<dbReference type="PROSITE" id="PS51725">
    <property type="entry name" value="ABM"/>
    <property type="match status" value="1"/>
</dbReference>
<accession>Q812Q3</accession>
<gene>
    <name evidence="1" type="primary">isdG</name>
    <name type="ordered locus">BC_4542</name>
</gene>
<keyword id="KW-0002">3D-structure</keyword>
<keyword id="KW-0963">Cytoplasm</keyword>
<keyword id="KW-0349">Heme</keyword>
<keyword id="KW-0408">Iron</keyword>
<keyword id="KW-0479">Metal-binding</keyword>
<keyword id="KW-0503">Monooxygenase</keyword>
<keyword id="KW-0560">Oxidoreductase</keyword>
<keyword id="KW-1185">Reference proteome</keyword>
<name>HDOX_BACCR</name>
<sequence>MIIVTNTAKITKGNGHKLIERFNKVGKVETMPGFLGLEVLLTQNTVDYDEVTISTRWNAKEDFQGWTKSAAFKDAHSHQGGMPEYILDNKIAYYDVKVVRMPMAAAQ</sequence>
<comment type="function">
    <text evidence="1">Allows bacterial pathogens to use the host heme as an iron source. Catalyzes the oxidative degradation of the heme macrocyclic porphyrin ring to the biliverdin in the presence of a suitable electron donor such as ascorbate or NADPH--cytochrome P450 reductase, with subsequent release of free iron.</text>
</comment>
<comment type="catalytic activity">
    <reaction evidence="1">
        <text>heme b + 3 reduced [NADPH--hemoprotein reductase] + 3 O2 = biliverdin IXalpha + CO + Fe(2+) + 3 oxidized [NADPH--hemoprotein reductase] + 3 H2O + H(+)</text>
        <dbReference type="Rhea" id="RHEA:21764"/>
        <dbReference type="Rhea" id="RHEA-COMP:11964"/>
        <dbReference type="Rhea" id="RHEA-COMP:11965"/>
        <dbReference type="ChEBI" id="CHEBI:15377"/>
        <dbReference type="ChEBI" id="CHEBI:15378"/>
        <dbReference type="ChEBI" id="CHEBI:15379"/>
        <dbReference type="ChEBI" id="CHEBI:17245"/>
        <dbReference type="ChEBI" id="CHEBI:29033"/>
        <dbReference type="ChEBI" id="CHEBI:57618"/>
        <dbReference type="ChEBI" id="CHEBI:57991"/>
        <dbReference type="ChEBI" id="CHEBI:58210"/>
        <dbReference type="ChEBI" id="CHEBI:60344"/>
        <dbReference type="EC" id="1.14.14.18"/>
    </reaction>
</comment>
<comment type="subunit">
    <text evidence="1">Homodimer.</text>
</comment>
<comment type="subcellular location">
    <subcellularLocation>
        <location evidence="1">Cytoplasm</location>
    </subcellularLocation>
</comment>
<comment type="similarity">
    <text evidence="1">Belongs to the antibiotic biosynthesis monooxygenase family. Heme-degrading monooxygenase IsdG subfamily.</text>
</comment>
<reference key="1">
    <citation type="journal article" date="2003" name="Nature">
        <title>Genome sequence of Bacillus cereus and comparative analysis with Bacillus anthracis.</title>
        <authorList>
            <person name="Ivanova N."/>
            <person name="Sorokin A."/>
            <person name="Anderson I."/>
            <person name="Galleron N."/>
            <person name="Candelon B."/>
            <person name="Kapatral V."/>
            <person name="Bhattacharyya A."/>
            <person name="Reznik G."/>
            <person name="Mikhailova N."/>
            <person name="Lapidus A."/>
            <person name="Chu L."/>
            <person name="Mazur M."/>
            <person name="Goltsman E."/>
            <person name="Larsen N."/>
            <person name="D'Souza M."/>
            <person name="Walunas T."/>
            <person name="Grechkin Y."/>
            <person name="Pusch G."/>
            <person name="Haselkorn R."/>
            <person name="Fonstein M."/>
            <person name="Ehrlich S.D."/>
            <person name="Overbeek R."/>
            <person name="Kyrpides N.C."/>
        </authorList>
    </citation>
    <scope>NUCLEOTIDE SEQUENCE [LARGE SCALE GENOMIC DNA]</scope>
    <source>
        <strain>ATCC 14579 / DSM 31 / CCUG 7414 / JCM 2152 / NBRC 15305 / NCIMB 9373 / NCTC 2599 / NRRL B-3711</strain>
    </source>
</reference>
<feature type="chain" id="PRO_0000270072" description="Heme-degrading monooxygenase">
    <location>
        <begin position="1"/>
        <end position="107"/>
    </location>
</feature>
<feature type="domain" description="ABM" evidence="1">
    <location>
        <begin position="2"/>
        <end position="94"/>
    </location>
</feature>
<feature type="binding site" evidence="1">
    <location>
        <position position="6"/>
    </location>
    <ligand>
        <name>Fe cation</name>
        <dbReference type="ChEBI" id="CHEBI:24875"/>
    </ligand>
</feature>
<feature type="binding site" description="axial binding residue" evidence="1">
    <location>
        <position position="76"/>
    </location>
    <ligand>
        <name>heme</name>
        <dbReference type="ChEBI" id="CHEBI:30413"/>
    </ligand>
    <ligandPart>
        <name>Fe</name>
        <dbReference type="ChEBI" id="CHEBI:18248"/>
    </ligandPart>
</feature>
<feature type="site" description="Transition state stabilizer" evidence="1">
    <location>
        <position position="66"/>
    </location>
</feature>
<feature type="strand" evidence="2">
    <location>
        <begin position="2"/>
        <end position="11"/>
    </location>
</feature>
<feature type="helix" evidence="2">
    <location>
        <begin position="15"/>
        <end position="22"/>
    </location>
</feature>
<feature type="helix" evidence="2">
    <location>
        <begin position="28"/>
        <end position="30"/>
    </location>
</feature>
<feature type="strand" evidence="2">
    <location>
        <begin position="34"/>
        <end position="43"/>
    </location>
</feature>
<feature type="strand" evidence="2">
    <location>
        <begin position="46"/>
        <end position="59"/>
    </location>
</feature>
<feature type="helix" evidence="2">
    <location>
        <begin position="60"/>
        <end position="67"/>
    </location>
</feature>
<feature type="helix" evidence="2">
    <location>
        <begin position="70"/>
        <end position="75"/>
    </location>
</feature>
<feature type="strand" evidence="2">
    <location>
        <begin position="77"/>
        <end position="79"/>
    </location>
</feature>
<feature type="strand" evidence="2">
    <location>
        <begin position="86"/>
        <end position="100"/>
    </location>
</feature>
<feature type="turn" evidence="2">
    <location>
        <begin position="103"/>
        <end position="105"/>
    </location>
</feature>
<evidence type="ECO:0000255" key="1">
    <source>
        <dbReference type="HAMAP-Rule" id="MF_01272"/>
    </source>
</evidence>
<evidence type="ECO:0007829" key="2">
    <source>
        <dbReference type="PDB" id="8AVH"/>
    </source>
</evidence>
<protein>
    <recommendedName>
        <fullName evidence="1">Heme-degrading monooxygenase</fullName>
        <ecNumber evidence="1">1.14.14.18</ecNumber>
    </recommendedName>
    <alternativeName>
        <fullName evidence="1">Heme oxygenase</fullName>
    </alternativeName>
    <alternativeName>
        <fullName evidence="1">Iron-regulated surface determinant</fullName>
    </alternativeName>
    <alternativeName>
        <fullName evidence="1">Iron-responsive surface determinant</fullName>
    </alternativeName>
</protein>
<proteinExistence type="evidence at protein level"/>
<organism>
    <name type="scientific">Bacillus cereus (strain ATCC 14579 / DSM 31 / CCUG 7414 / JCM 2152 / NBRC 15305 / NCIMB 9373 / NCTC 2599 / NRRL B-3711)</name>
    <dbReference type="NCBI Taxonomy" id="226900"/>
    <lineage>
        <taxon>Bacteria</taxon>
        <taxon>Bacillati</taxon>
        <taxon>Bacillota</taxon>
        <taxon>Bacilli</taxon>
        <taxon>Bacillales</taxon>
        <taxon>Bacillaceae</taxon>
        <taxon>Bacillus</taxon>
        <taxon>Bacillus cereus group</taxon>
    </lineage>
</organism>